<sequence>MSKFEVYLDEGGKYRFRLRARNGQIIAVSQGYKSEEGCIKGIQSVKENAPNARIIVLE</sequence>
<accession>Q8TKT0</accession>
<dbReference type="EMBL" id="AE010299">
    <property type="protein sequence ID" value="AAM06685.1"/>
    <property type="status" value="ALT_INIT"/>
    <property type="molecule type" value="Genomic_DNA"/>
</dbReference>
<dbReference type="RefSeq" id="WP_083755950.1">
    <property type="nucleotide sequence ID" value="NC_003552.1"/>
</dbReference>
<dbReference type="SMR" id="Q8TKT0"/>
<dbReference type="EnsemblBacteria" id="AAM06685">
    <property type="protein sequence ID" value="AAM06685"/>
    <property type="gene ID" value="MA_3316"/>
</dbReference>
<dbReference type="GeneID" id="32154538"/>
<dbReference type="KEGG" id="mac:MA_3316"/>
<dbReference type="HOGENOM" id="CLU_163886_1_2_2"/>
<dbReference type="InParanoid" id="Q8TKT0"/>
<dbReference type="OrthoDB" id="108721at2157"/>
<dbReference type="PhylomeDB" id="Q8TKT0"/>
<dbReference type="Proteomes" id="UP000002487">
    <property type="component" value="Chromosome"/>
</dbReference>
<dbReference type="Gene3D" id="3.30.160.160">
    <property type="entry name" value="YegP-like"/>
    <property type="match status" value="1"/>
</dbReference>
<dbReference type="InterPro" id="IPR010879">
    <property type="entry name" value="DUF1508"/>
</dbReference>
<dbReference type="InterPro" id="IPR051141">
    <property type="entry name" value="UPF0339_domain"/>
</dbReference>
<dbReference type="InterPro" id="IPR036913">
    <property type="entry name" value="YegP-like_sf"/>
</dbReference>
<dbReference type="PANTHER" id="PTHR40606">
    <property type="match status" value="1"/>
</dbReference>
<dbReference type="PANTHER" id="PTHR40606:SF1">
    <property type="entry name" value="UPF0339 PROTEIN YEGP"/>
    <property type="match status" value="1"/>
</dbReference>
<dbReference type="Pfam" id="PF07411">
    <property type="entry name" value="DUF1508"/>
    <property type="match status" value="1"/>
</dbReference>
<dbReference type="SUPFAM" id="SSF160113">
    <property type="entry name" value="YegP-like"/>
    <property type="match status" value="1"/>
</dbReference>
<protein>
    <recommendedName>
        <fullName>UPF0339 protein MA_3316</fullName>
    </recommendedName>
</protein>
<reference key="1">
    <citation type="journal article" date="2002" name="Genome Res.">
        <title>The genome of Methanosarcina acetivorans reveals extensive metabolic and physiological diversity.</title>
        <authorList>
            <person name="Galagan J.E."/>
            <person name="Nusbaum C."/>
            <person name="Roy A."/>
            <person name="Endrizzi M.G."/>
            <person name="Macdonald P."/>
            <person name="FitzHugh W."/>
            <person name="Calvo S."/>
            <person name="Engels R."/>
            <person name="Smirnov S."/>
            <person name="Atnoor D."/>
            <person name="Brown A."/>
            <person name="Allen N."/>
            <person name="Naylor J."/>
            <person name="Stange-Thomann N."/>
            <person name="DeArellano K."/>
            <person name="Johnson R."/>
            <person name="Linton L."/>
            <person name="McEwan P."/>
            <person name="McKernan K."/>
            <person name="Talamas J."/>
            <person name="Tirrell A."/>
            <person name="Ye W."/>
            <person name="Zimmer A."/>
            <person name="Barber R.D."/>
            <person name="Cann I."/>
            <person name="Graham D.E."/>
            <person name="Grahame D.A."/>
            <person name="Guss A.M."/>
            <person name="Hedderich R."/>
            <person name="Ingram-Smith C."/>
            <person name="Kuettner H.C."/>
            <person name="Krzycki J.A."/>
            <person name="Leigh J.A."/>
            <person name="Li W."/>
            <person name="Liu J."/>
            <person name="Mukhopadhyay B."/>
            <person name="Reeve J.N."/>
            <person name="Smith K."/>
            <person name="Springer T.A."/>
            <person name="Umayam L.A."/>
            <person name="White O."/>
            <person name="White R.H."/>
            <person name="de Macario E.C."/>
            <person name="Ferry J.G."/>
            <person name="Jarrell K.F."/>
            <person name="Jing H."/>
            <person name="Macario A.J.L."/>
            <person name="Paulsen I.T."/>
            <person name="Pritchett M."/>
            <person name="Sowers K.R."/>
            <person name="Swanson R.V."/>
            <person name="Zinder S.H."/>
            <person name="Lander E."/>
            <person name="Metcalf W.W."/>
            <person name="Birren B."/>
        </authorList>
    </citation>
    <scope>NUCLEOTIDE SEQUENCE [LARGE SCALE GENOMIC DNA]</scope>
    <source>
        <strain>ATCC 35395 / DSM 2834 / JCM 12185 / C2A</strain>
    </source>
</reference>
<evidence type="ECO:0000305" key="1"/>
<feature type="chain" id="PRO_0000218150" description="UPF0339 protein MA_3316">
    <location>
        <begin position="1"/>
        <end position="58"/>
    </location>
</feature>
<proteinExistence type="inferred from homology"/>
<organism>
    <name type="scientific">Methanosarcina acetivorans (strain ATCC 35395 / DSM 2834 / JCM 12185 / C2A)</name>
    <dbReference type="NCBI Taxonomy" id="188937"/>
    <lineage>
        <taxon>Archaea</taxon>
        <taxon>Methanobacteriati</taxon>
        <taxon>Methanobacteriota</taxon>
        <taxon>Stenosarchaea group</taxon>
        <taxon>Methanomicrobia</taxon>
        <taxon>Methanosarcinales</taxon>
        <taxon>Methanosarcinaceae</taxon>
        <taxon>Methanosarcina</taxon>
    </lineage>
</organism>
<comment type="similarity">
    <text evidence="1">Belongs to the UPF0339 family.</text>
</comment>
<comment type="sequence caution" evidence="1">
    <conflict type="erroneous initiation">
        <sequence resource="EMBL-CDS" id="AAM06685"/>
    </conflict>
</comment>
<keyword id="KW-1185">Reference proteome</keyword>
<gene>
    <name type="ordered locus">MA_3316</name>
</gene>
<name>Y3316_METAC</name>